<gene>
    <name type="primary">RAX2</name>
    <name type="synonym">QRX</name>
    <name type="synonym">RAXL1</name>
</gene>
<organism>
    <name type="scientific">Bos taurus</name>
    <name type="common">Bovine</name>
    <dbReference type="NCBI Taxonomy" id="9913"/>
    <lineage>
        <taxon>Eukaryota</taxon>
        <taxon>Metazoa</taxon>
        <taxon>Chordata</taxon>
        <taxon>Craniata</taxon>
        <taxon>Vertebrata</taxon>
        <taxon>Euteleostomi</taxon>
        <taxon>Mammalia</taxon>
        <taxon>Eutheria</taxon>
        <taxon>Laurasiatheria</taxon>
        <taxon>Artiodactyla</taxon>
        <taxon>Ruminantia</taxon>
        <taxon>Pecora</taxon>
        <taxon>Bovidae</taxon>
        <taxon>Bovinae</taxon>
        <taxon>Bos</taxon>
    </lineage>
</organism>
<sequence length="184" mass="20168">MFLSPGEGPAAEGGGPGPGEEAPKKKHRRNRTTFTTYQLHQLERAFEASHYPDVYSREELAAKVHLPEVRVQVWFQNRRAKWRRQERLESGSGAVAAPRLPEVPALPFARPPTMPLSLEPWLGPGPPAVPALPRLLGSGPGLQGSFGPHAFSPAFMDGFTLEEGSLRLLAKEHVQALDRAWPSA</sequence>
<comment type="function">
    <text evidence="1">May be involved in modulating the expression of photoreceptor specific genes. Binds to the Ret-1 and Bat-1 element within the rhodopsin promoter (By similarity).</text>
</comment>
<comment type="subunit">
    <text evidence="1">Interacts with CRX.</text>
</comment>
<comment type="subcellular location">
    <subcellularLocation>
        <location evidence="2">Nucleus</location>
    </subcellularLocation>
</comment>
<comment type="tissue specificity">
    <text evidence="4">Expressed in retina. Stronger expression in cells of the outer nuclear layers than in cells of the inner nuclear layers. Also weakly detected in brain, testis and spleen.</text>
</comment>
<comment type="developmental stage">
    <text evidence="4">Detected as early as 4.5 months gestation.</text>
</comment>
<comment type="domain">
    <text evidence="1">The Homeobox transactivates the Ret-1 element in the presence of CRX and NRL.</text>
</comment>
<reference key="1">
    <citation type="journal article" date="2004" name="Hum. Mol. Genet.">
        <title>QRX, a novel homeobox gene, modulates photoreceptor gene expression.</title>
        <authorList>
            <person name="Wang Q.-L."/>
            <person name="Chen S."/>
            <person name="Esumi N."/>
            <person name="Swain P.K."/>
            <person name="Haines H.S."/>
            <person name="Peng G."/>
            <person name="Melia B.M."/>
            <person name="McIntosh I."/>
            <person name="Heckenlively J.R."/>
            <person name="Jacobson S.G."/>
            <person name="Stone E.M."/>
            <person name="Swaroop A."/>
            <person name="Zack D.J."/>
        </authorList>
    </citation>
    <scope>NUCLEOTIDE SEQUENCE [MRNA]</scope>
    <scope>TISSUE SPECIFICITY</scope>
    <scope>DEVELOPMENTAL STAGE</scope>
</reference>
<proteinExistence type="evidence at transcript level"/>
<name>RAX2_BOVIN</name>
<protein>
    <recommendedName>
        <fullName>Retina and anterior neural fold homeobox protein 2</fullName>
    </recommendedName>
    <alternativeName>
        <fullName>Q50-type retinal homeobox protein</fullName>
    </alternativeName>
    <alternativeName>
        <fullName>Retina and anterior neural fold homeobox-like protein 1</fullName>
    </alternativeName>
</protein>
<keyword id="KW-0238">DNA-binding</keyword>
<keyword id="KW-0371">Homeobox</keyword>
<keyword id="KW-0539">Nucleus</keyword>
<keyword id="KW-1185">Reference proteome</keyword>
<keyword id="KW-0716">Sensory transduction</keyword>
<keyword id="KW-0804">Transcription</keyword>
<keyword id="KW-0805">Transcription regulation</keyword>
<keyword id="KW-0844">Vision</keyword>
<evidence type="ECO:0000250" key="1"/>
<evidence type="ECO:0000255" key="2">
    <source>
        <dbReference type="PROSITE-ProRule" id="PRU00108"/>
    </source>
</evidence>
<evidence type="ECO:0000256" key="3">
    <source>
        <dbReference type="SAM" id="MobiDB-lite"/>
    </source>
</evidence>
<evidence type="ECO:0000269" key="4">
    <source>
    </source>
</evidence>
<dbReference type="EMBL" id="AY211276">
    <property type="protein sequence ID" value="AAP41546.1"/>
    <property type="molecule type" value="mRNA"/>
</dbReference>
<dbReference type="RefSeq" id="NP_872594.1">
    <property type="nucleotide sequence ID" value="NM_182653.1"/>
</dbReference>
<dbReference type="RefSeq" id="XP_010805266.1">
    <property type="nucleotide sequence ID" value="XM_010806964.2"/>
</dbReference>
<dbReference type="SMR" id="Q7YRX0"/>
<dbReference type="FunCoup" id="Q7YRX0">
    <property type="interactions" value="4"/>
</dbReference>
<dbReference type="IntAct" id="Q7YRX0">
    <property type="interactions" value="1"/>
</dbReference>
<dbReference type="STRING" id="9913.ENSBTAP00000012858"/>
<dbReference type="PaxDb" id="9913-ENSBTAP00000012858"/>
<dbReference type="Ensembl" id="ENSBTAT00000012858.3">
    <property type="protein sequence ID" value="ENSBTAP00000012858.2"/>
    <property type="gene ID" value="ENSBTAG00000009750.3"/>
</dbReference>
<dbReference type="GeneID" id="359713"/>
<dbReference type="KEGG" id="bta:359713"/>
<dbReference type="CTD" id="84839"/>
<dbReference type="VEuPathDB" id="HostDB:ENSBTAG00000009750"/>
<dbReference type="VGNC" id="VGNC:33767">
    <property type="gene designation" value="RAX2"/>
</dbReference>
<dbReference type="eggNOG" id="KOG0490">
    <property type="taxonomic scope" value="Eukaryota"/>
</dbReference>
<dbReference type="GeneTree" id="ENSGT00940000163572"/>
<dbReference type="HOGENOM" id="CLU_047013_4_0_1"/>
<dbReference type="InParanoid" id="Q7YRX0"/>
<dbReference type="OMA" id="TLDRTWQ"/>
<dbReference type="OrthoDB" id="6159439at2759"/>
<dbReference type="TreeFam" id="TF315976"/>
<dbReference type="Proteomes" id="UP000009136">
    <property type="component" value="Chromosome 7"/>
</dbReference>
<dbReference type="Bgee" id="ENSBTAG00000009750">
    <property type="expression patterns" value="Expressed in retina and 5 other cell types or tissues"/>
</dbReference>
<dbReference type="GO" id="GO:0005634">
    <property type="term" value="C:nucleus"/>
    <property type="evidence" value="ECO:0007669"/>
    <property type="project" value="UniProtKB-SubCell"/>
</dbReference>
<dbReference type="GO" id="GO:0001228">
    <property type="term" value="F:DNA-binding transcription activator activity, RNA polymerase II-specific"/>
    <property type="evidence" value="ECO:0007669"/>
    <property type="project" value="Ensembl"/>
</dbReference>
<dbReference type="GO" id="GO:0000981">
    <property type="term" value="F:DNA-binding transcription factor activity, RNA polymerase II-specific"/>
    <property type="evidence" value="ECO:0000318"/>
    <property type="project" value="GO_Central"/>
</dbReference>
<dbReference type="GO" id="GO:0000978">
    <property type="term" value="F:RNA polymerase II cis-regulatory region sequence-specific DNA binding"/>
    <property type="evidence" value="ECO:0000318"/>
    <property type="project" value="GO_Central"/>
</dbReference>
<dbReference type="GO" id="GO:0006357">
    <property type="term" value="P:regulation of transcription by RNA polymerase II"/>
    <property type="evidence" value="ECO:0000318"/>
    <property type="project" value="GO_Central"/>
</dbReference>
<dbReference type="GO" id="GO:0007601">
    <property type="term" value="P:visual perception"/>
    <property type="evidence" value="ECO:0007669"/>
    <property type="project" value="UniProtKB-KW"/>
</dbReference>
<dbReference type="CDD" id="cd00086">
    <property type="entry name" value="homeodomain"/>
    <property type="match status" value="1"/>
</dbReference>
<dbReference type="FunFam" id="1.10.10.60:FF:000071">
    <property type="entry name" value="Retinal homeobox gene 2"/>
    <property type="match status" value="1"/>
</dbReference>
<dbReference type="Gene3D" id="1.10.10.60">
    <property type="entry name" value="Homeodomain-like"/>
    <property type="match status" value="1"/>
</dbReference>
<dbReference type="InterPro" id="IPR001356">
    <property type="entry name" value="HD"/>
</dbReference>
<dbReference type="InterPro" id="IPR017970">
    <property type="entry name" value="Homeobox_CS"/>
</dbReference>
<dbReference type="InterPro" id="IPR009057">
    <property type="entry name" value="Homeodomain-like_sf"/>
</dbReference>
<dbReference type="InterPro" id="IPR043562">
    <property type="entry name" value="RAX/RAX2"/>
</dbReference>
<dbReference type="PANTHER" id="PTHR46271">
    <property type="entry name" value="HOMEOBOX PROTEIN, PUTATIVE-RELATED"/>
    <property type="match status" value="1"/>
</dbReference>
<dbReference type="PANTHER" id="PTHR46271:SF2">
    <property type="entry name" value="RETINA AND ANTERIOR NEURAL FOLD HOMEOBOX PROTEIN 2"/>
    <property type="match status" value="1"/>
</dbReference>
<dbReference type="Pfam" id="PF00046">
    <property type="entry name" value="Homeodomain"/>
    <property type="match status" value="1"/>
</dbReference>
<dbReference type="SMART" id="SM00389">
    <property type="entry name" value="HOX"/>
    <property type="match status" value="1"/>
</dbReference>
<dbReference type="SUPFAM" id="SSF46689">
    <property type="entry name" value="Homeodomain-like"/>
    <property type="match status" value="1"/>
</dbReference>
<dbReference type="PROSITE" id="PS00027">
    <property type="entry name" value="HOMEOBOX_1"/>
    <property type="match status" value="1"/>
</dbReference>
<dbReference type="PROSITE" id="PS50071">
    <property type="entry name" value="HOMEOBOX_2"/>
    <property type="match status" value="1"/>
</dbReference>
<feature type="chain" id="PRO_0000285046" description="Retina and anterior neural fold homeobox protein 2">
    <location>
        <begin position="1"/>
        <end position="184"/>
    </location>
</feature>
<feature type="DNA-binding region" description="Homeobox" evidence="2">
    <location>
        <begin position="27"/>
        <end position="86"/>
    </location>
</feature>
<feature type="region of interest" description="Disordered" evidence="3">
    <location>
        <begin position="1"/>
        <end position="32"/>
    </location>
</feature>
<feature type="compositionally biased region" description="Low complexity" evidence="3">
    <location>
        <begin position="1"/>
        <end position="10"/>
    </location>
</feature>
<accession>Q7YRX0</accession>